<accession>P20462</accession>
<protein>
    <recommendedName>
        <fullName>Late lactation protein A</fullName>
        <shortName>LLP-A</shortName>
    </recommendedName>
</protein>
<proteinExistence type="evidence at protein level"/>
<name>LLPA_NOTEU</name>
<comment type="function">
    <text>Probably serves a role in the transport of a small ligand released during the hydrolysis of milk fat.</text>
</comment>
<comment type="subcellular location">
    <subcellularLocation>
        <location>Secreted</location>
    </subcellularLocation>
</comment>
<comment type="tissue specificity">
    <text>Mammary gland specific. Secreted in milk.</text>
</comment>
<comment type="developmental stage">
    <text>Produced during the late phase of lactation.</text>
</comment>
<comment type="similarity">
    <text evidence="3">Belongs to the calycin superfamily. Lipocalin family.</text>
</comment>
<keyword id="KW-0903">Direct protein sequencing</keyword>
<keyword id="KW-1015">Disulfide bond</keyword>
<keyword id="KW-0494">Milk protein</keyword>
<keyword id="KW-0964">Secreted</keyword>
<keyword id="KW-0732">Signal</keyword>
<keyword id="KW-0813">Transport</keyword>
<feature type="signal peptide" evidence="2">
    <location>
        <begin position="1"/>
        <end position="18"/>
    </location>
</feature>
<feature type="chain" id="PRO_0000017985" description="Late lactation protein A">
    <location>
        <begin position="19"/>
        <end position="176"/>
    </location>
</feature>
<feature type="disulfide bond" evidence="1">
    <location>
        <begin position="78"/>
        <end position="171"/>
    </location>
</feature>
<feature type="sequence conflict" description="In Ref. 2; AA sequence." evidence="3" ref="2">
    <original>T</original>
    <variation>S</variation>
    <location>
        <position position="59"/>
    </location>
</feature>
<feature type="sequence conflict" description="In Ref. 2; AA sequence." evidence="3" ref="2">
    <original>T</original>
    <variation>I</variation>
    <location>
        <position position="126"/>
    </location>
</feature>
<gene>
    <name type="primary">LLPA</name>
</gene>
<sequence length="176" mass="20612">MRVLFLTISLSLFSIIHADDFAFSEFKPSEGTYYVQVIAVDKEFPEDEIPRDISPLTITYLNNGKMEAKFTVKKDNNCEEINLTLEKIDEPRKITTTRHLHHICDTVRTSEEKYWILSCVREFQGTQIREAELVGPNTDENPKALEDFYRFINRERFVERRIITPRQTEACTSENA</sequence>
<dbReference type="EMBL" id="X15213">
    <property type="protein sequence ID" value="CAA33283.1"/>
    <property type="molecule type" value="mRNA"/>
</dbReference>
<dbReference type="PIR" id="A28561">
    <property type="entry name" value="A28561"/>
</dbReference>
<dbReference type="PIR" id="A33672">
    <property type="entry name" value="A33672"/>
</dbReference>
<dbReference type="SMR" id="P20462"/>
<dbReference type="GO" id="GO:0005615">
    <property type="term" value="C:extracellular space"/>
    <property type="evidence" value="ECO:0007669"/>
    <property type="project" value="TreeGrafter"/>
</dbReference>
<dbReference type="GO" id="GO:0036094">
    <property type="term" value="F:small molecule binding"/>
    <property type="evidence" value="ECO:0007669"/>
    <property type="project" value="InterPro"/>
</dbReference>
<dbReference type="CDD" id="cd19414">
    <property type="entry name" value="lipocalin_1_3_4_13-like"/>
    <property type="match status" value="1"/>
</dbReference>
<dbReference type="Gene3D" id="2.40.128.20">
    <property type="match status" value="1"/>
</dbReference>
<dbReference type="InterPro" id="IPR012674">
    <property type="entry name" value="Calycin"/>
</dbReference>
<dbReference type="InterPro" id="IPR002345">
    <property type="entry name" value="Lipocalin"/>
</dbReference>
<dbReference type="InterPro" id="IPR000566">
    <property type="entry name" value="Lipocln_cytosolic_FA-bd_dom"/>
</dbReference>
<dbReference type="InterPro" id="IPR002450">
    <property type="entry name" value="von_Ebner_gland"/>
</dbReference>
<dbReference type="PANTHER" id="PTHR11430">
    <property type="entry name" value="LIPOCALIN"/>
    <property type="match status" value="1"/>
</dbReference>
<dbReference type="PANTHER" id="PTHR11430:SF124">
    <property type="entry name" value="LIPOCALIN 1-LIKE PROTEIN 1-RELATED"/>
    <property type="match status" value="1"/>
</dbReference>
<dbReference type="Pfam" id="PF00061">
    <property type="entry name" value="Lipocalin"/>
    <property type="match status" value="1"/>
</dbReference>
<dbReference type="PRINTS" id="PR01175">
    <property type="entry name" value="VNEBNERGLAND"/>
</dbReference>
<dbReference type="SUPFAM" id="SSF50814">
    <property type="entry name" value="Lipocalins"/>
    <property type="match status" value="1"/>
</dbReference>
<evidence type="ECO:0000250" key="1"/>
<evidence type="ECO:0000269" key="2">
    <source>
    </source>
</evidence>
<evidence type="ECO:0000305" key="3"/>
<reference key="1">
    <citation type="journal article" date="1989" name="Biochem. Biophys. Res. Commun.">
        <title>Molecular cloning and characterization of a novel marsupial milk protein gene.</title>
        <authorList>
            <person name="Collet C."/>
            <person name="Joseph R."/>
            <person name="Nicholas K.R."/>
        </authorList>
    </citation>
    <scope>NUCLEOTIDE SEQUENCE [MRNA]</scope>
</reference>
<reference key="2">
    <citation type="journal article" date="1987" name="Biochem. J.">
        <title>A novel whey protein synthesized only in late lactation by the mammary gland from the tammar (Macropus eugenii).</title>
        <authorList>
            <person name="Nicholas K.R."/>
            <person name="Messer M."/>
            <person name="Elliot C."/>
            <person name="Maher F."/>
            <person name="Shaw D.C."/>
        </authorList>
    </citation>
    <scope>PROTEIN SEQUENCE OF 19-87 AND 116-131</scope>
</reference>
<reference key="3">
    <citation type="journal article" date="1993" name="Biochim. Biophys. Acta">
        <title>A novel member of the lipocalin superfamily: tammar wallaby late-lactation protein.</title>
        <authorList>
            <person name="Collet C."/>
            <person name="Joseph R."/>
        </authorList>
    </citation>
    <scope>SIMILARITY TO THE LIPOCALIN FAMILY</scope>
</reference>
<organism>
    <name type="scientific">Notamacropus eugenii</name>
    <name type="common">Tammar wallaby</name>
    <name type="synonym">Macropus eugenii</name>
    <dbReference type="NCBI Taxonomy" id="9315"/>
    <lineage>
        <taxon>Eukaryota</taxon>
        <taxon>Metazoa</taxon>
        <taxon>Chordata</taxon>
        <taxon>Craniata</taxon>
        <taxon>Vertebrata</taxon>
        <taxon>Euteleostomi</taxon>
        <taxon>Mammalia</taxon>
        <taxon>Metatheria</taxon>
        <taxon>Diprotodontia</taxon>
        <taxon>Macropodidae</taxon>
        <taxon>Notamacropus</taxon>
    </lineage>
</organism>